<accession>B1IC65</accession>
<gene>
    <name evidence="1" type="primary">carB</name>
    <name type="ordered locus">SPH_1391</name>
</gene>
<organism>
    <name type="scientific">Streptococcus pneumoniae (strain Hungary19A-6)</name>
    <dbReference type="NCBI Taxonomy" id="487214"/>
    <lineage>
        <taxon>Bacteria</taxon>
        <taxon>Bacillati</taxon>
        <taxon>Bacillota</taxon>
        <taxon>Bacilli</taxon>
        <taxon>Lactobacillales</taxon>
        <taxon>Streptococcaceae</taxon>
        <taxon>Streptococcus</taxon>
    </lineage>
</organism>
<feature type="chain" id="PRO_1000138900" description="Carbamoyl phosphate synthase large chain">
    <location>
        <begin position="1"/>
        <end position="1058"/>
    </location>
</feature>
<feature type="domain" description="ATP-grasp 1" evidence="1">
    <location>
        <begin position="133"/>
        <end position="327"/>
    </location>
</feature>
<feature type="domain" description="ATP-grasp 2" evidence="1">
    <location>
        <begin position="671"/>
        <end position="861"/>
    </location>
</feature>
<feature type="domain" description="MGS-like" evidence="1">
    <location>
        <begin position="930"/>
        <end position="1058"/>
    </location>
</feature>
<feature type="region of interest" description="Carboxyphosphate synthetic domain" evidence="1">
    <location>
        <begin position="1"/>
        <end position="401"/>
    </location>
</feature>
<feature type="region of interest" description="Oligomerization domain" evidence="1">
    <location>
        <begin position="402"/>
        <end position="546"/>
    </location>
</feature>
<feature type="region of interest" description="Carbamoyl phosphate synthetic domain" evidence="1">
    <location>
        <begin position="547"/>
        <end position="929"/>
    </location>
</feature>
<feature type="region of interest" description="Allosteric domain" evidence="1">
    <location>
        <begin position="930"/>
        <end position="1058"/>
    </location>
</feature>
<feature type="binding site" evidence="1">
    <location>
        <position position="129"/>
    </location>
    <ligand>
        <name>ATP</name>
        <dbReference type="ChEBI" id="CHEBI:30616"/>
        <label>1</label>
    </ligand>
</feature>
<feature type="binding site" evidence="1">
    <location>
        <position position="169"/>
    </location>
    <ligand>
        <name>ATP</name>
        <dbReference type="ChEBI" id="CHEBI:30616"/>
        <label>1</label>
    </ligand>
</feature>
<feature type="binding site" evidence="1">
    <location>
        <position position="175"/>
    </location>
    <ligand>
        <name>ATP</name>
        <dbReference type="ChEBI" id="CHEBI:30616"/>
        <label>1</label>
    </ligand>
</feature>
<feature type="binding site" evidence="1">
    <location>
        <position position="176"/>
    </location>
    <ligand>
        <name>ATP</name>
        <dbReference type="ChEBI" id="CHEBI:30616"/>
        <label>1</label>
    </ligand>
</feature>
<feature type="binding site" evidence="1">
    <location>
        <position position="208"/>
    </location>
    <ligand>
        <name>ATP</name>
        <dbReference type="ChEBI" id="CHEBI:30616"/>
        <label>1</label>
    </ligand>
</feature>
<feature type="binding site" evidence="1">
    <location>
        <position position="210"/>
    </location>
    <ligand>
        <name>ATP</name>
        <dbReference type="ChEBI" id="CHEBI:30616"/>
        <label>1</label>
    </ligand>
</feature>
<feature type="binding site" evidence="1">
    <location>
        <position position="215"/>
    </location>
    <ligand>
        <name>ATP</name>
        <dbReference type="ChEBI" id="CHEBI:30616"/>
        <label>1</label>
    </ligand>
</feature>
<feature type="binding site" evidence="1">
    <location>
        <position position="241"/>
    </location>
    <ligand>
        <name>ATP</name>
        <dbReference type="ChEBI" id="CHEBI:30616"/>
        <label>1</label>
    </ligand>
</feature>
<feature type="binding site" evidence="1">
    <location>
        <position position="242"/>
    </location>
    <ligand>
        <name>ATP</name>
        <dbReference type="ChEBI" id="CHEBI:30616"/>
        <label>1</label>
    </ligand>
</feature>
<feature type="binding site" evidence="1">
    <location>
        <position position="243"/>
    </location>
    <ligand>
        <name>ATP</name>
        <dbReference type="ChEBI" id="CHEBI:30616"/>
        <label>1</label>
    </ligand>
</feature>
<feature type="binding site" evidence="1">
    <location>
        <position position="284"/>
    </location>
    <ligand>
        <name>ATP</name>
        <dbReference type="ChEBI" id="CHEBI:30616"/>
        <label>1</label>
    </ligand>
</feature>
<feature type="binding site" evidence="1">
    <location>
        <position position="284"/>
    </location>
    <ligand>
        <name>Mg(2+)</name>
        <dbReference type="ChEBI" id="CHEBI:18420"/>
        <label>1</label>
    </ligand>
</feature>
<feature type="binding site" evidence="1">
    <location>
        <position position="284"/>
    </location>
    <ligand>
        <name>Mn(2+)</name>
        <dbReference type="ChEBI" id="CHEBI:29035"/>
        <label>1</label>
    </ligand>
</feature>
<feature type="binding site" evidence="1">
    <location>
        <position position="298"/>
    </location>
    <ligand>
        <name>ATP</name>
        <dbReference type="ChEBI" id="CHEBI:30616"/>
        <label>1</label>
    </ligand>
</feature>
<feature type="binding site" evidence="1">
    <location>
        <position position="298"/>
    </location>
    <ligand>
        <name>Mg(2+)</name>
        <dbReference type="ChEBI" id="CHEBI:18420"/>
        <label>1</label>
    </ligand>
</feature>
<feature type="binding site" evidence="1">
    <location>
        <position position="298"/>
    </location>
    <ligand>
        <name>Mg(2+)</name>
        <dbReference type="ChEBI" id="CHEBI:18420"/>
        <label>2</label>
    </ligand>
</feature>
<feature type="binding site" evidence="1">
    <location>
        <position position="298"/>
    </location>
    <ligand>
        <name>Mn(2+)</name>
        <dbReference type="ChEBI" id="CHEBI:29035"/>
        <label>1</label>
    </ligand>
</feature>
<feature type="binding site" evidence="1">
    <location>
        <position position="298"/>
    </location>
    <ligand>
        <name>Mn(2+)</name>
        <dbReference type="ChEBI" id="CHEBI:29035"/>
        <label>2</label>
    </ligand>
</feature>
<feature type="binding site" evidence="1">
    <location>
        <position position="300"/>
    </location>
    <ligand>
        <name>Mg(2+)</name>
        <dbReference type="ChEBI" id="CHEBI:18420"/>
        <label>2</label>
    </ligand>
</feature>
<feature type="binding site" evidence="1">
    <location>
        <position position="300"/>
    </location>
    <ligand>
        <name>Mn(2+)</name>
        <dbReference type="ChEBI" id="CHEBI:29035"/>
        <label>2</label>
    </ligand>
</feature>
<feature type="binding site" evidence="1">
    <location>
        <position position="707"/>
    </location>
    <ligand>
        <name>ATP</name>
        <dbReference type="ChEBI" id="CHEBI:30616"/>
        <label>2</label>
    </ligand>
</feature>
<feature type="binding site" evidence="1">
    <location>
        <position position="746"/>
    </location>
    <ligand>
        <name>ATP</name>
        <dbReference type="ChEBI" id="CHEBI:30616"/>
        <label>2</label>
    </ligand>
</feature>
<feature type="binding site" evidence="1">
    <location>
        <position position="748"/>
    </location>
    <ligand>
        <name>ATP</name>
        <dbReference type="ChEBI" id="CHEBI:30616"/>
        <label>2</label>
    </ligand>
</feature>
<feature type="binding site" evidence="1">
    <location>
        <position position="752"/>
    </location>
    <ligand>
        <name>ATP</name>
        <dbReference type="ChEBI" id="CHEBI:30616"/>
        <label>2</label>
    </ligand>
</feature>
<feature type="binding site" evidence="1">
    <location>
        <position position="777"/>
    </location>
    <ligand>
        <name>ATP</name>
        <dbReference type="ChEBI" id="CHEBI:30616"/>
        <label>2</label>
    </ligand>
</feature>
<feature type="binding site" evidence="1">
    <location>
        <position position="778"/>
    </location>
    <ligand>
        <name>ATP</name>
        <dbReference type="ChEBI" id="CHEBI:30616"/>
        <label>2</label>
    </ligand>
</feature>
<feature type="binding site" evidence="1">
    <location>
        <position position="779"/>
    </location>
    <ligand>
        <name>ATP</name>
        <dbReference type="ChEBI" id="CHEBI:30616"/>
        <label>2</label>
    </ligand>
</feature>
<feature type="binding site" evidence="1">
    <location>
        <position position="780"/>
    </location>
    <ligand>
        <name>ATP</name>
        <dbReference type="ChEBI" id="CHEBI:30616"/>
        <label>2</label>
    </ligand>
</feature>
<feature type="binding site" evidence="1">
    <location>
        <position position="820"/>
    </location>
    <ligand>
        <name>ATP</name>
        <dbReference type="ChEBI" id="CHEBI:30616"/>
        <label>2</label>
    </ligand>
</feature>
<feature type="binding site" evidence="1">
    <location>
        <position position="820"/>
    </location>
    <ligand>
        <name>Mg(2+)</name>
        <dbReference type="ChEBI" id="CHEBI:18420"/>
        <label>3</label>
    </ligand>
</feature>
<feature type="binding site" evidence="1">
    <location>
        <position position="820"/>
    </location>
    <ligand>
        <name>Mn(2+)</name>
        <dbReference type="ChEBI" id="CHEBI:29035"/>
        <label>3</label>
    </ligand>
</feature>
<feature type="binding site" evidence="1">
    <location>
        <position position="832"/>
    </location>
    <ligand>
        <name>ATP</name>
        <dbReference type="ChEBI" id="CHEBI:30616"/>
        <label>2</label>
    </ligand>
</feature>
<feature type="binding site" evidence="1">
    <location>
        <position position="832"/>
    </location>
    <ligand>
        <name>Mg(2+)</name>
        <dbReference type="ChEBI" id="CHEBI:18420"/>
        <label>3</label>
    </ligand>
</feature>
<feature type="binding site" evidence="1">
    <location>
        <position position="832"/>
    </location>
    <ligand>
        <name>Mg(2+)</name>
        <dbReference type="ChEBI" id="CHEBI:18420"/>
        <label>4</label>
    </ligand>
</feature>
<feature type="binding site" evidence="1">
    <location>
        <position position="832"/>
    </location>
    <ligand>
        <name>Mn(2+)</name>
        <dbReference type="ChEBI" id="CHEBI:29035"/>
        <label>3</label>
    </ligand>
</feature>
<feature type="binding site" evidence="1">
    <location>
        <position position="832"/>
    </location>
    <ligand>
        <name>Mn(2+)</name>
        <dbReference type="ChEBI" id="CHEBI:29035"/>
        <label>4</label>
    </ligand>
</feature>
<feature type="binding site" evidence="1">
    <location>
        <position position="834"/>
    </location>
    <ligand>
        <name>Mg(2+)</name>
        <dbReference type="ChEBI" id="CHEBI:18420"/>
        <label>4</label>
    </ligand>
</feature>
<feature type="binding site" evidence="1">
    <location>
        <position position="834"/>
    </location>
    <ligand>
        <name>Mn(2+)</name>
        <dbReference type="ChEBI" id="CHEBI:29035"/>
        <label>4</label>
    </ligand>
</feature>
<sequence length="1058" mass="116234">MPKRTDIQKIMVIGSGPIIIGQAAEFDYAGTQACLSLKEEGYEVVLVNSNPATIMTDKEIADKVYIEPITLEFVTRILRKERPDALLPTLGGQTGLNMAMELSKNGILDELGVEFLGTRLSAIDQAEDRDLFKQLMEELEQPIPESEIVNTVEEAIAFAATIGYPVIVRPAFTLGGTGGGMCANEKELREITENGLKLSPVTQCLIERSIAGFKEIEYEVMRDSADNALVVCNMENFDPVGIHTGDSIVFAPAQTMSDYENQMLRDASLSIIRALKIEGGCNVQLALDPNSFKYYVIEVNPRVSRSSALASKATGYPIAKLAAKIAVGLTLDEVINPVTGSTYAMFEPALDYVVAKIPRFPFDKFEKGERRLGTQMKATGEVMAIGRNIEESLLKACRSLEIGVHHNEIPELAAVSDDALIEKVVKAQDDRLFYVSEAIRRGYTPEEIAELTKIDIFYLDKLLHIFEIEQELGAHPQDLEVLKTAKLNGFSDRKIAELWGTTDDQVRQLRLENKIVPVYKMVDTCAAEFDSETPYFYSTYGWENESIRSDKESVLVLGSGPIRIGQGVEFDYATVHSVKAIQAAGYEAIIMNSNPETVSTDFSVSDKLYFEPLTFEDVMNVIDLEQPKGVIVQFGGQTAINLAEPLAKAGVTILGTQVADLDRAEDRDLFEQALKELDIPQPPGQTATNEEEAALAARKIGFPVLVRPSYVLGGRAMEIVENEEDLRSYMRTAVKASPDHPVLVDSYIVGQECEVDAISDGKNVLIPGIMEHIERAGVHSGDSMAVYPPQTLSQKVQETIADYTKRLAIGLHCLGMMNIQFVIKDEKVYVIEVNPRASRTVPFLSKVTNIPMAQVATKLILGQSLSELGYQNGLYPESTRVHIKAPVFSFTKLAKVDSLLGPEMKSTGEVMGSDATLEKALYKAFEASYLHLPTFGNVVFTIADDAKEEALNLARRFQNIGYGILATEGTAAFFASHGLQAQPVGKIGDDDKDIPSFVRKGRIQAIINTVGTKRTADEDGEQIRRSAIEHGVPLFTALDTANAMLKVLESRSFVTEAI</sequence>
<reference key="1">
    <citation type="journal article" date="2010" name="Genome Biol.">
        <title>Structure and dynamics of the pan-genome of Streptococcus pneumoniae and closely related species.</title>
        <authorList>
            <person name="Donati C."/>
            <person name="Hiller N.L."/>
            <person name="Tettelin H."/>
            <person name="Muzzi A."/>
            <person name="Croucher N.J."/>
            <person name="Angiuoli S.V."/>
            <person name="Oggioni M."/>
            <person name="Dunning Hotopp J.C."/>
            <person name="Hu F.Z."/>
            <person name="Riley D.R."/>
            <person name="Covacci A."/>
            <person name="Mitchell T.J."/>
            <person name="Bentley S.D."/>
            <person name="Kilian M."/>
            <person name="Ehrlich G.D."/>
            <person name="Rappuoli R."/>
            <person name="Moxon E.R."/>
            <person name="Masignani V."/>
        </authorList>
    </citation>
    <scope>NUCLEOTIDE SEQUENCE [LARGE SCALE GENOMIC DNA]</scope>
    <source>
        <strain>Hungary19A-6</strain>
    </source>
</reference>
<evidence type="ECO:0000255" key="1">
    <source>
        <dbReference type="HAMAP-Rule" id="MF_01210"/>
    </source>
</evidence>
<name>CARB_STRPI</name>
<proteinExistence type="inferred from homology"/>
<keyword id="KW-0028">Amino-acid biosynthesis</keyword>
<keyword id="KW-0055">Arginine biosynthesis</keyword>
<keyword id="KW-0067">ATP-binding</keyword>
<keyword id="KW-0436">Ligase</keyword>
<keyword id="KW-0460">Magnesium</keyword>
<keyword id="KW-0464">Manganese</keyword>
<keyword id="KW-0479">Metal-binding</keyword>
<keyword id="KW-0547">Nucleotide-binding</keyword>
<keyword id="KW-0665">Pyrimidine biosynthesis</keyword>
<keyword id="KW-0677">Repeat</keyword>
<comment type="function">
    <text evidence="1">Large subunit of the glutamine-dependent carbamoyl phosphate synthetase (CPSase). CPSase catalyzes the formation of carbamoyl phosphate from the ammonia moiety of glutamine, carbonate, and phosphate donated by ATP, constituting the first step of 2 biosynthetic pathways, one leading to arginine and/or urea and the other to pyrimidine nucleotides. The large subunit (synthetase) binds the substrates ammonia (free or transferred from glutamine from the small subunit), hydrogencarbonate and ATP and carries out an ATP-coupled ligase reaction, activating hydrogencarbonate by forming carboxy phosphate which reacts with ammonia to form carbamoyl phosphate.</text>
</comment>
<comment type="catalytic activity">
    <reaction evidence="1">
        <text>hydrogencarbonate + L-glutamine + 2 ATP + H2O = carbamoyl phosphate + L-glutamate + 2 ADP + phosphate + 2 H(+)</text>
        <dbReference type="Rhea" id="RHEA:18633"/>
        <dbReference type="ChEBI" id="CHEBI:15377"/>
        <dbReference type="ChEBI" id="CHEBI:15378"/>
        <dbReference type="ChEBI" id="CHEBI:17544"/>
        <dbReference type="ChEBI" id="CHEBI:29985"/>
        <dbReference type="ChEBI" id="CHEBI:30616"/>
        <dbReference type="ChEBI" id="CHEBI:43474"/>
        <dbReference type="ChEBI" id="CHEBI:58228"/>
        <dbReference type="ChEBI" id="CHEBI:58359"/>
        <dbReference type="ChEBI" id="CHEBI:456216"/>
        <dbReference type="EC" id="6.3.5.5"/>
    </reaction>
</comment>
<comment type="catalytic activity">
    <molecule>Carbamoyl phosphate synthase large chain</molecule>
    <reaction evidence="1">
        <text>hydrogencarbonate + NH4(+) + 2 ATP = carbamoyl phosphate + 2 ADP + phosphate + 2 H(+)</text>
        <dbReference type="Rhea" id="RHEA:18029"/>
        <dbReference type="ChEBI" id="CHEBI:15378"/>
        <dbReference type="ChEBI" id="CHEBI:17544"/>
        <dbReference type="ChEBI" id="CHEBI:28938"/>
        <dbReference type="ChEBI" id="CHEBI:30616"/>
        <dbReference type="ChEBI" id="CHEBI:43474"/>
        <dbReference type="ChEBI" id="CHEBI:58228"/>
        <dbReference type="ChEBI" id="CHEBI:456216"/>
        <dbReference type="EC" id="6.3.4.16"/>
    </reaction>
</comment>
<comment type="cofactor">
    <cofactor evidence="1">
        <name>Mg(2+)</name>
        <dbReference type="ChEBI" id="CHEBI:18420"/>
    </cofactor>
    <cofactor evidence="1">
        <name>Mn(2+)</name>
        <dbReference type="ChEBI" id="CHEBI:29035"/>
    </cofactor>
    <text evidence="1">Binds 4 Mg(2+) or Mn(2+) ions per subunit.</text>
</comment>
<comment type="pathway">
    <text evidence="1">Amino-acid biosynthesis; L-arginine biosynthesis; carbamoyl phosphate from bicarbonate: step 1/1.</text>
</comment>
<comment type="pathway">
    <text evidence="1">Pyrimidine metabolism; UMP biosynthesis via de novo pathway; (S)-dihydroorotate from bicarbonate: step 1/3.</text>
</comment>
<comment type="subunit">
    <text evidence="1">Composed of two chains; the small (or glutamine) chain promotes the hydrolysis of glutamine to ammonia, which is used by the large (or ammonia) chain to synthesize carbamoyl phosphate. Tetramer of heterodimers (alpha,beta)4.</text>
</comment>
<comment type="domain">
    <text evidence="1">The large subunit is composed of 2 ATP-grasp domains that are involved in binding the 2 ATP molecules needed for carbamoyl phosphate synthesis. The N-terminal ATP-grasp domain (referred to as the carboxyphosphate synthetic component) catalyzes the ATP-dependent phosphorylation of hydrogencarbonate to carboxyphosphate and the subsequent nucleophilic attack by ammonia to form a carbamate intermediate. The C-terminal ATP-grasp domain (referred to as the carbamoyl phosphate synthetic component) then catalyzes the phosphorylation of carbamate with the second ATP to form the end product carbamoyl phosphate. The reactive and unstable enzyme intermediates are sequentially channeled from one active site to the next through the interior of the protein over a distance of at least 96 A.</text>
</comment>
<comment type="similarity">
    <text evidence="1">Belongs to the CarB family.</text>
</comment>
<dbReference type="EC" id="6.3.4.16" evidence="1"/>
<dbReference type="EC" id="6.3.5.5" evidence="1"/>
<dbReference type="EMBL" id="CP000936">
    <property type="protein sequence ID" value="ACA35773.1"/>
    <property type="molecule type" value="Genomic_DNA"/>
</dbReference>
<dbReference type="RefSeq" id="WP_012291583.1">
    <property type="nucleotide sequence ID" value="NC_010380.1"/>
</dbReference>
<dbReference type="SMR" id="B1IC65"/>
<dbReference type="KEGG" id="spv:SPH_1391"/>
<dbReference type="HOGENOM" id="CLU_000513_1_2_9"/>
<dbReference type="UniPathway" id="UPA00068">
    <property type="reaction ID" value="UER00171"/>
</dbReference>
<dbReference type="UniPathway" id="UPA00070">
    <property type="reaction ID" value="UER00115"/>
</dbReference>
<dbReference type="Proteomes" id="UP000002163">
    <property type="component" value="Chromosome"/>
</dbReference>
<dbReference type="GO" id="GO:0005737">
    <property type="term" value="C:cytoplasm"/>
    <property type="evidence" value="ECO:0007669"/>
    <property type="project" value="TreeGrafter"/>
</dbReference>
<dbReference type="GO" id="GO:0005524">
    <property type="term" value="F:ATP binding"/>
    <property type="evidence" value="ECO:0007669"/>
    <property type="project" value="UniProtKB-UniRule"/>
</dbReference>
<dbReference type="GO" id="GO:0004087">
    <property type="term" value="F:carbamoyl-phosphate synthase (ammonia) activity"/>
    <property type="evidence" value="ECO:0007669"/>
    <property type="project" value="RHEA"/>
</dbReference>
<dbReference type="GO" id="GO:0004088">
    <property type="term" value="F:carbamoyl-phosphate synthase (glutamine-hydrolyzing) activity"/>
    <property type="evidence" value="ECO:0007669"/>
    <property type="project" value="UniProtKB-UniRule"/>
</dbReference>
<dbReference type="GO" id="GO:0046872">
    <property type="term" value="F:metal ion binding"/>
    <property type="evidence" value="ECO:0007669"/>
    <property type="project" value="UniProtKB-KW"/>
</dbReference>
<dbReference type="GO" id="GO:0044205">
    <property type="term" value="P:'de novo' UMP biosynthetic process"/>
    <property type="evidence" value="ECO:0007669"/>
    <property type="project" value="UniProtKB-UniRule"/>
</dbReference>
<dbReference type="GO" id="GO:0006541">
    <property type="term" value="P:glutamine metabolic process"/>
    <property type="evidence" value="ECO:0007669"/>
    <property type="project" value="TreeGrafter"/>
</dbReference>
<dbReference type="GO" id="GO:0006526">
    <property type="term" value="P:L-arginine biosynthetic process"/>
    <property type="evidence" value="ECO:0007669"/>
    <property type="project" value="UniProtKB-UniRule"/>
</dbReference>
<dbReference type="CDD" id="cd01424">
    <property type="entry name" value="MGS_CPS_II"/>
    <property type="match status" value="1"/>
</dbReference>
<dbReference type="FunFam" id="1.10.1030.10:FF:000002">
    <property type="entry name" value="Carbamoyl-phosphate synthase large chain"/>
    <property type="match status" value="1"/>
</dbReference>
<dbReference type="FunFam" id="3.30.1490.20:FF:000001">
    <property type="entry name" value="Carbamoyl-phosphate synthase large chain"/>
    <property type="match status" value="1"/>
</dbReference>
<dbReference type="FunFam" id="3.30.470.20:FF:000001">
    <property type="entry name" value="Carbamoyl-phosphate synthase large chain"/>
    <property type="match status" value="1"/>
</dbReference>
<dbReference type="FunFam" id="3.30.470.20:FF:000026">
    <property type="entry name" value="Carbamoyl-phosphate synthase large chain"/>
    <property type="match status" value="1"/>
</dbReference>
<dbReference type="FunFam" id="3.40.50.1380:FF:000017">
    <property type="entry name" value="Carbamoyl-phosphate synthase large chain"/>
    <property type="match status" value="1"/>
</dbReference>
<dbReference type="FunFam" id="3.40.50.20:FF:000001">
    <property type="entry name" value="Carbamoyl-phosphate synthase large chain"/>
    <property type="match status" value="2"/>
</dbReference>
<dbReference type="Gene3D" id="3.40.50.20">
    <property type="match status" value="2"/>
</dbReference>
<dbReference type="Gene3D" id="3.30.1490.20">
    <property type="entry name" value="ATP-grasp fold, A domain"/>
    <property type="match status" value="1"/>
</dbReference>
<dbReference type="Gene3D" id="3.30.470.20">
    <property type="entry name" value="ATP-grasp fold, B domain"/>
    <property type="match status" value="2"/>
</dbReference>
<dbReference type="Gene3D" id="1.10.1030.10">
    <property type="entry name" value="Carbamoyl-phosphate synthetase, large subunit oligomerisation domain"/>
    <property type="match status" value="1"/>
</dbReference>
<dbReference type="Gene3D" id="3.40.50.1380">
    <property type="entry name" value="Methylglyoxal synthase-like domain"/>
    <property type="match status" value="1"/>
</dbReference>
<dbReference type="HAMAP" id="MF_01210_A">
    <property type="entry name" value="CPSase_L_chain_A"/>
    <property type="match status" value="1"/>
</dbReference>
<dbReference type="HAMAP" id="MF_01210_B">
    <property type="entry name" value="CPSase_L_chain_B"/>
    <property type="match status" value="1"/>
</dbReference>
<dbReference type="InterPro" id="IPR011761">
    <property type="entry name" value="ATP-grasp"/>
</dbReference>
<dbReference type="InterPro" id="IPR013815">
    <property type="entry name" value="ATP_grasp_subdomain_1"/>
</dbReference>
<dbReference type="InterPro" id="IPR006275">
    <property type="entry name" value="CarbamoylP_synth_lsu"/>
</dbReference>
<dbReference type="InterPro" id="IPR005480">
    <property type="entry name" value="CarbamoylP_synth_lsu_oligo"/>
</dbReference>
<dbReference type="InterPro" id="IPR036897">
    <property type="entry name" value="CarbamoylP_synth_lsu_oligo_sf"/>
</dbReference>
<dbReference type="InterPro" id="IPR005479">
    <property type="entry name" value="CbamoylP_synth_lsu-like_ATP-bd"/>
</dbReference>
<dbReference type="InterPro" id="IPR005483">
    <property type="entry name" value="CbamoylP_synth_lsu_CPSase_dom"/>
</dbReference>
<dbReference type="InterPro" id="IPR011607">
    <property type="entry name" value="MGS-like_dom"/>
</dbReference>
<dbReference type="InterPro" id="IPR036914">
    <property type="entry name" value="MGS-like_dom_sf"/>
</dbReference>
<dbReference type="InterPro" id="IPR033937">
    <property type="entry name" value="MGS_CPS_CarB"/>
</dbReference>
<dbReference type="InterPro" id="IPR016185">
    <property type="entry name" value="PreATP-grasp_dom_sf"/>
</dbReference>
<dbReference type="NCBIfam" id="TIGR01369">
    <property type="entry name" value="CPSaseII_lrg"/>
    <property type="match status" value="1"/>
</dbReference>
<dbReference type="NCBIfam" id="NF003671">
    <property type="entry name" value="PRK05294.1"/>
    <property type="match status" value="1"/>
</dbReference>
<dbReference type="NCBIfam" id="NF009455">
    <property type="entry name" value="PRK12815.1"/>
    <property type="match status" value="1"/>
</dbReference>
<dbReference type="PANTHER" id="PTHR11405:SF53">
    <property type="entry name" value="CARBAMOYL-PHOSPHATE SYNTHASE [AMMONIA], MITOCHONDRIAL"/>
    <property type="match status" value="1"/>
</dbReference>
<dbReference type="PANTHER" id="PTHR11405">
    <property type="entry name" value="CARBAMOYLTRANSFERASE FAMILY MEMBER"/>
    <property type="match status" value="1"/>
</dbReference>
<dbReference type="Pfam" id="PF02786">
    <property type="entry name" value="CPSase_L_D2"/>
    <property type="match status" value="2"/>
</dbReference>
<dbReference type="Pfam" id="PF02787">
    <property type="entry name" value="CPSase_L_D3"/>
    <property type="match status" value="1"/>
</dbReference>
<dbReference type="Pfam" id="PF02142">
    <property type="entry name" value="MGS"/>
    <property type="match status" value="1"/>
</dbReference>
<dbReference type="PRINTS" id="PR00098">
    <property type="entry name" value="CPSASE"/>
</dbReference>
<dbReference type="SMART" id="SM01096">
    <property type="entry name" value="CPSase_L_D3"/>
    <property type="match status" value="1"/>
</dbReference>
<dbReference type="SMART" id="SM01209">
    <property type="entry name" value="GARS_A"/>
    <property type="match status" value="1"/>
</dbReference>
<dbReference type="SMART" id="SM00851">
    <property type="entry name" value="MGS"/>
    <property type="match status" value="1"/>
</dbReference>
<dbReference type="SUPFAM" id="SSF48108">
    <property type="entry name" value="Carbamoyl phosphate synthetase, large subunit connection domain"/>
    <property type="match status" value="1"/>
</dbReference>
<dbReference type="SUPFAM" id="SSF56059">
    <property type="entry name" value="Glutathione synthetase ATP-binding domain-like"/>
    <property type="match status" value="2"/>
</dbReference>
<dbReference type="SUPFAM" id="SSF52335">
    <property type="entry name" value="Methylglyoxal synthase-like"/>
    <property type="match status" value="1"/>
</dbReference>
<dbReference type="SUPFAM" id="SSF52440">
    <property type="entry name" value="PreATP-grasp domain"/>
    <property type="match status" value="2"/>
</dbReference>
<dbReference type="PROSITE" id="PS50975">
    <property type="entry name" value="ATP_GRASP"/>
    <property type="match status" value="2"/>
</dbReference>
<dbReference type="PROSITE" id="PS00866">
    <property type="entry name" value="CPSASE_1"/>
    <property type="match status" value="2"/>
</dbReference>
<dbReference type="PROSITE" id="PS00867">
    <property type="entry name" value="CPSASE_2"/>
    <property type="match status" value="2"/>
</dbReference>
<dbReference type="PROSITE" id="PS51855">
    <property type="entry name" value="MGS"/>
    <property type="match status" value="1"/>
</dbReference>
<protein>
    <recommendedName>
        <fullName evidence="1">Carbamoyl phosphate synthase large chain</fullName>
        <ecNumber evidence="1">6.3.4.16</ecNumber>
        <ecNumber evidence="1">6.3.5.5</ecNumber>
    </recommendedName>
    <alternativeName>
        <fullName evidence="1">Carbamoyl phosphate synthetase ammonia chain</fullName>
    </alternativeName>
</protein>